<evidence type="ECO:0000250" key="1">
    <source>
        <dbReference type="UniProtKB" id="P63142"/>
    </source>
</evidence>
<evidence type="ECO:0000250" key="2">
    <source>
        <dbReference type="UniProtKB" id="Q9NZV8"/>
    </source>
</evidence>
<evidence type="ECO:0000250" key="3">
    <source>
        <dbReference type="UniProtKB" id="Q9Z0V2"/>
    </source>
</evidence>
<evidence type="ECO:0000256" key="4">
    <source>
        <dbReference type="SAM" id="MobiDB-lite"/>
    </source>
</evidence>
<evidence type="ECO:0000269" key="5">
    <source>
    </source>
</evidence>
<evidence type="ECO:0000269" key="6">
    <source>
    </source>
</evidence>
<evidence type="ECO:0000269" key="7">
    <source>
    </source>
</evidence>
<evidence type="ECO:0000269" key="8">
    <source>
    </source>
</evidence>
<evidence type="ECO:0000269" key="9">
    <source>
    </source>
</evidence>
<evidence type="ECO:0000269" key="10">
    <source>
    </source>
</evidence>
<evidence type="ECO:0000269" key="11">
    <source>
    </source>
</evidence>
<evidence type="ECO:0000269" key="12">
    <source>
    </source>
</evidence>
<evidence type="ECO:0000269" key="13">
    <source>
    </source>
</evidence>
<evidence type="ECO:0000269" key="14">
    <source>
    </source>
</evidence>
<evidence type="ECO:0000269" key="15">
    <source>
    </source>
</evidence>
<evidence type="ECO:0000269" key="16">
    <source>
    </source>
</evidence>
<evidence type="ECO:0000269" key="17">
    <source>
    </source>
</evidence>
<evidence type="ECO:0000269" key="18">
    <source>
    </source>
</evidence>
<evidence type="ECO:0000269" key="19">
    <source>
    </source>
</evidence>
<evidence type="ECO:0000269" key="20">
    <source>
    </source>
</evidence>
<evidence type="ECO:0000269" key="21">
    <source>
    </source>
</evidence>
<evidence type="ECO:0000269" key="22">
    <source>
    </source>
</evidence>
<evidence type="ECO:0000269" key="23">
    <source>
    </source>
</evidence>
<evidence type="ECO:0000269" key="24">
    <source>
    </source>
</evidence>
<evidence type="ECO:0000269" key="25">
    <source>
    </source>
</evidence>
<evidence type="ECO:0000269" key="26">
    <source>
    </source>
</evidence>
<evidence type="ECO:0000269" key="27">
    <source>
    </source>
</evidence>
<evidence type="ECO:0000269" key="28">
    <source>
    </source>
</evidence>
<evidence type="ECO:0000269" key="29">
    <source>
    </source>
</evidence>
<evidence type="ECO:0000269" key="30">
    <source>
    </source>
</evidence>
<evidence type="ECO:0000269" key="31">
    <source>
    </source>
</evidence>
<evidence type="ECO:0000269" key="32">
    <source>
    </source>
</evidence>
<evidence type="ECO:0000269" key="33">
    <source>
    </source>
</evidence>
<evidence type="ECO:0000269" key="34">
    <source>
    </source>
</evidence>
<evidence type="ECO:0000269" key="35">
    <source>
    </source>
</evidence>
<evidence type="ECO:0000269" key="36">
    <source>
    </source>
</evidence>
<evidence type="ECO:0000269" key="37">
    <source>
    </source>
</evidence>
<evidence type="ECO:0000269" key="38">
    <source>
    </source>
</evidence>
<evidence type="ECO:0000269" key="39">
    <source>
    </source>
</evidence>
<evidence type="ECO:0000269" key="40">
    <source>
    </source>
</evidence>
<evidence type="ECO:0000269" key="41">
    <source>
    </source>
</evidence>
<evidence type="ECO:0000269" key="42">
    <source>
    </source>
</evidence>
<evidence type="ECO:0000269" key="43">
    <source>
    </source>
</evidence>
<evidence type="ECO:0000269" key="44">
    <source>
    </source>
</evidence>
<evidence type="ECO:0000269" key="45">
    <source>
    </source>
</evidence>
<evidence type="ECO:0000269" key="46">
    <source>
    </source>
</evidence>
<evidence type="ECO:0000269" key="47">
    <source>
    </source>
</evidence>
<evidence type="ECO:0000269" key="48">
    <source>
    </source>
</evidence>
<evidence type="ECO:0000269" key="49">
    <source>
    </source>
</evidence>
<evidence type="ECO:0000269" key="50">
    <source>
    </source>
</evidence>
<evidence type="ECO:0000269" key="51">
    <source>
    </source>
</evidence>
<evidence type="ECO:0000269" key="52">
    <source>
    </source>
</evidence>
<evidence type="ECO:0000269" key="53">
    <source>
    </source>
</evidence>
<evidence type="ECO:0000303" key="54">
    <source>
    </source>
</evidence>
<evidence type="ECO:0000303" key="55">
    <source>
    </source>
</evidence>
<evidence type="ECO:0000303" key="56">
    <source>
    </source>
</evidence>
<evidence type="ECO:0000303" key="57">
    <source>
    </source>
</evidence>
<evidence type="ECO:0000305" key="58"/>
<evidence type="ECO:0000305" key="59">
    <source>
    </source>
</evidence>
<evidence type="ECO:0000305" key="60">
    <source>
    </source>
</evidence>
<evidence type="ECO:0000305" key="61">
    <source>
    </source>
</evidence>
<evidence type="ECO:0000305" key="62">
    <source>
    </source>
</evidence>
<evidence type="ECO:0000305" key="63">
    <source>
    </source>
</evidence>
<evidence type="ECO:0000305" key="64">
    <source>
    </source>
</evidence>
<evidence type="ECO:0000305" key="65">
    <source>
    </source>
</evidence>
<evidence type="ECO:0000305" key="66">
    <source>
    </source>
</evidence>
<evidence type="ECO:0000305" key="67">
    <source>
    </source>
</evidence>
<evidence type="ECO:0000312" key="68">
    <source>
        <dbReference type="RGD" id="68393"/>
    </source>
</evidence>
<evidence type="ECO:0007744" key="69">
    <source>
        <dbReference type="PDB" id="1NN7"/>
    </source>
</evidence>
<evidence type="ECO:0007744" key="70">
    <source>
        <dbReference type="PDB" id="1S6C"/>
    </source>
</evidence>
<evidence type="ECO:0007744" key="71">
    <source>
    </source>
</evidence>
<evidence type="ECO:0007829" key="72">
    <source>
        <dbReference type="PDB" id="1NN7"/>
    </source>
</evidence>
<evidence type="ECO:0007829" key="73">
    <source>
        <dbReference type="PDB" id="1S6C"/>
    </source>
</evidence>
<name>KCND2_RAT</name>
<keyword id="KW-0002">3D-structure</keyword>
<keyword id="KW-0965">Cell junction</keyword>
<keyword id="KW-1003">Cell membrane</keyword>
<keyword id="KW-0966">Cell projection</keyword>
<keyword id="KW-0407">Ion channel</keyword>
<keyword id="KW-0406">Ion transport</keyword>
<keyword id="KW-0472">Membrane</keyword>
<keyword id="KW-0479">Metal-binding</keyword>
<keyword id="KW-0597">Phosphoprotein</keyword>
<keyword id="KW-0628">Postsynaptic cell membrane</keyword>
<keyword id="KW-0630">Potassium</keyword>
<keyword id="KW-0631">Potassium channel</keyword>
<keyword id="KW-0633">Potassium transport</keyword>
<keyword id="KW-1185">Reference proteome</keyword>
<keyword id="KW-0770">Synapse</keyword>
<keyword id="KW-0812">Transmembrane</keyword>
<keyword id="KW-1133">Transmembrane helix</keyword>
<keyword id="KW-0813">Transport</keyword>
<keyword id="KW-0851">Voltage-gated channel</keyword>
<keyword id="KW-0862">Zinc</keyword>
<feature type="chain" id="PRO_0000054067" description="A-type voltage-gated potassium channel KCND2">
    <location>
        <begin position="1"/>
        <end position="630"/>
    </location>
</feature>
<feature type="topological domain" description="Cytoplasmic" evidence="2">
    <location>
        <begin position="1"/>
        <end position="184"/>
    </location>
</feature>
<feature type="transmembrane region" description="Helical; Name=Segment S1" evidence="2">
    <location>
        <begin position="185"/>
        <end position="206"/>
    </location>
</feature>
<feature type="topological domain" description="Extracellular" evidence="2">
    <location>
        <begin position="207"/>
        <end position="226"/>
    </location>
</feature>
<feature type="transmembrane region" description="Helical; Name=Segment S2" evidence="2">
    <location>
        <begin position="227"/>
        <end position="249"/>
    </location>
</feature>
<feature type="topological domain" description="Cytoplasmic" evidence="2">
    <location>
        <begin position="250"/>
        <end position="256"/>
    </location>
</feature>
<feature type="transmembrane region" description="Helical; Name=Segment S3" evidence="2">
    <location>
        <begin position="257"/>
        <end position="281"/>
    </location>
</feature>
<feature type="topological domain" description="Extracellular" evidence="2">
    <location>
        <begin position="282"/>
        <end position="287"/>
    </location>
</feature>
<feature type="transmembrane region" description="Helical; Voltage-sensor; Name=Segment S4" evidence="2">
    <location>
        <begin position="288"/>
        <end position="307"/>
    </location>
</feature>
<feature type="topological domain" description="Cytoplasmic" evidence="2">
    <location>
        <begin position="308"/>
        <end position="321"/>
    </location>
</feature>
<feature type="transmembrane region" description="Helical; Name=Segment S5" evidence="2">
    <location>
        <begin position="322"/>
        <end position="345"/>
    </location>
</feature>
<feature type="topological domain" description="Extracellular" evidence="2">
    <location>
        <begin position="346"/>
        <end position="357"/>
    </location>
</feature>
<feature type="intramembrane region" description="Helical; Name=Pore helix" evidence="1">
    <location>
        <begin position="358"/>
        <end position="369"/>
    </location>
</feature>
<feature type="intramembrane region" evidence="1">
    <location>
        <begin position="370"/>
        <end position="377"/>
    </location>
</feature>
<feature type="topological domain" description="Extracellular" evidence="2">
    <location>
        <begin position="378"/>
        <end position="380"/>
    </location>
</feature>
<feature type="transmembrane region" description="Helical; Name=Segment S6" evidence="2">
    <location>
        <begin position="381"/>
        <end position="403"/>
    </location>
</feature>
<feature type="topological domain" description="Cytoplasmic" evidence="2">
    <location>
        <begin position="404"/>
        <end position="630"/>
    </location>
</feature>
<feature type="region of interest" description="Interaction with KCNIP1, KCNIP2, and other family members" evidence="59 60">
    <location>
        <begin position="2"/>
        <end position="20"/>
    </location>
</feature>
<feature type="region of interest" description="Interaction with KCNIP1" evidence="60">
    <location>
        <begin position="71"/>
        <end position="90"/>
    </location>
</feature>
<feature type="region of interest" description="S4-S5 linker" evidence="1">
    <location>
        <begin position="308"/>
        <end position="321"/>
    </location>
</feature>
<feature type="region of interest" description="Important for normal channel activation and inactivation, for interaction with KCNIP2, and probably other family members as well" evidence="63">
    <location>
        <begin position="474"/>
        <end position="630"/>
    </location>
</feature>
<feature type="region of interest" description="Required for dendritic targeting" evidence="15">
    <location>
        <begin position="474"/>
        <end position="489"/>
    </location>
</feature>
<feature type="region of interest" description="Disordered" evidence="4">
    <location>
        <begin position="600"/>
        <end position="623"/>
    </location>
</feature>
<feature type="short sequence motif" description="Selectivity filter" evidence="1">
    <location>
        <begin position="370"/>
        <end position="375"/>
    </location>
</feature>
<feature type="short sequence motif" description="PDZ-binding" evidence="12 19">
    <location>
        <begin position="627"/>
        <end position="630"/>
    </location>
</feature>
<feature type="binding site" description="in chain A" evidence="18 69">
    <location>
        <position position="105"/>
    </location>
    <ligand>
        <name>Zn(2+)</name>
        <dbReference type="ChEBI" id="CHEBI:29105"/>
        <note>ligand shared between homotetrameric partners</note>
    </ligand>
</feature>
<feature type="binding site" description="in chain B" evidence="2">
    <location>
        <position position="111"/>
    </location>
    <ligand>
        <name>Zn(2+)</name>
        <dbReference type="ChEBI" id="CHEBI:29105"/>
        <note>ligand shared between homotetrameric partners</note>
    </ligand>
</feature>
<feature type="binding site" description="in chain A" evidence="18 69">
    <location>
        <position position="132"/>
    </location>
    <ligand>
        <name>Zn(2+)</name>
        <dbReference type="ChEBI" id="CHEBI:29105"/>
        <note>ligand shared between homotetrameric partners</note>
    </ligand>
</feature>
<feature type="binding site" description="in chain A" evidence="18 69">
    <location>
        <position position="133"/>
    </location>
    <ligand>
        <name>Zn(2+)</name>
        <dbReference type="ChEBI" id="CHEBI:29105"/>
        <note>ligand shared between homotetrameric partners</note>
    </ligand>
</feature>
<feature type="binding site" evidence="2">
    <location>
        <position position="370"/>
    </location>
    <ligand>
        <name>K(+)</name>
        <dbReference type="ChEBI" id="CHEBI:29103"/>
        <note>ligand shared between homotetrameric partners</note>
    </ligand>
</feature>
<feature type="binding site" evidence="2">
    <location>
        <position position="371"/>
    </location>
    <ligand>
        <name>K(+)</name>
        <dbReference type="ChEBI" id="CHEBI:29103"/>
        <note>ligand shared between homotetrameric partners</note>
    </ligand>
</feature>
<feature type="binding site" evidence="2">
    <location>
        <position position="372"/>
    </location>
    <ligand>
        <name>K(+)</name>
        <dbReference type="ChEBI" id="CHEBI:29103"/>
        <note>ligand shared between homotetrameric partners</note>
    </ligand>
</feature>
<feature type="binding site" evidence="2">
    <location>
        <position position="373"/>
    </location>
    <ligand>
        <name>K(+)</name>
        <dbReference type="ChEBI" id="CHEBI:29103"/>
        <note>ligand shared between homotetrameric partners</note>
    </ligand>
</feature>
<feature type="modified residue" description="Phosphothreonine" evidence="6">
    <location>
        <position position="38"/>
    </location>
</feature>
<feature type="modified residue" description="Phosphoserine" evidence="46">
    <location>
        <position position="438"/>
    </location>
</feature>
<feature type="modified residue" description="Phosphoserine" evidence="40 71">
    <location>
        <position position="548"/>
    </location>
</feature>
<feature type="modified residue" description="Phosphoserine" evidence="6 13 17 37 40 71">
    <location>
        <position position="552"/>
    </location>
</feature>
<feature type="modified residue" description="Phosphoserine" evidence="40 71">
    <location>
        <position position="572"/>
    </location>
</feature>
<feature type="modified residue" description="Phosphoserine" evidence="40 71">
    <location>
        <position position="575"/>
    </location>
</feature>
<feature type="modified residue" description="Phosphothreonine" evidence="8">
    <location>
        <position position="602"/>
    </location>
</feature>
<feature type="modified residue" description="Phosphothreonine" evidence="8">
    <location>
        <position position="607"/>
    </location>
</feature>
<feature type="modified residue" description="Phosphoserine" evidence="8">
    <location>
        <position position="616"/>
    </location>
</feature>
<feature type="mutagenesis site" description="Greatly reduces interaction with KCNIP1." evidence="21">
    <location>
        <begin position="7"/>
        <end position="11"/>
    </location>
</feature>
<feature type="mutagenesis site" description="Abolishes interaction with KCNP1; when associated with A-11." evidence="20">
    <original>W</original>
    <variation>A</variation>
    <location>
        <position position="8"/>
    </location>
</feature>
<feature type="mutagenesis site" description="Abolishes interaction with KCNP1; when associated with A-8." evidence="20">
    <original>F</original>
    <variation>A</variation>
    <location>
        <position position="11"/>
    </location>
</feature>
<feature type="mutagenesis site" description="Abolishes expression." evidence="18">
    <original>L</original>
    <variation>R</variation>
    <location>
        <position position="66"/>
    </location>
</feature>
<feature type="mutagenesis site" description="Abolishes interaction with KCNIP1." evidence="21">
    <original>E</original>
    <variation>K</variation>
    <location>
        <position position="71"/>
    </location>
</feature>
<feature type="mutagenesis site" description="Abolishes interaction with KCNIP1." evidence="21">
    <original>D</original>
    <variation>M</variation>
    <location>
        <position position="73"/>
    </location>
</feature>
<feature type="mutagenesis site" description="Abolishes interaction with KCNIP1." evidence="21">
    <original>F</original>
    <variation>R</variation>
    <location>
        <position position="74"/>
    </location>
</feature>
<feature type="mutagenesis site" description="Abolishes interaction with KCNIP1." evidence="21">
    <original>E</original>
    <variation>L</variation>
    <variation>R</variation>
    <location>
        <position position="79"/>
    </location>
</feature>
<feature type="mutagenesis site" description="Greatly reduces expression and changes multimerization." evidence="18">
    <original>R</original>
    <variation>A</variation>
    <location>
        <position position="93"/>
    </location>
</feature>
<feature type="mutagenesis site" description="Abolishes tetramerization and assembly of a functional channel." evidence="16">
    <original>H</original>
    <variation>A</variation>
    <location>
        <position position="105"/>
    </location>
</feature>
<feature type="mutagenesis site" description="Abolishes tetramerization and assembly of a functional channel; when associated with A-105; A-132 and A-133." evidence="16">
    <original>C</original>
    <variation>A</variation>
    <location>
        <position position="111"/>
    </location>
</feature>
<feature type="mutagenesis site" description="Abolishes tetramerization and assembly of a functional channel; when associated with A-105; A-111 and A-133." evidence="16">
    <original>C</original>
    <variation>A</variation>
    <location>
        <position position="132"/>
    </location>
</feature>
<feature type="mutagenesis site" description="Abolishes tetramerization and assembly of a functional channel; when associated with A-105; A-111 and A-132." evidence="16">
    <original>C</original>
    <variation>A</variation>
    <location>
        <position position="133"/>
    </location>
</feature>
<feature type="mutagenesis site" description="Loss of dendritic targeted expression." evidence="15">
    <location>
        <begin position="481"/>
        <end position="482"/>
    </location>
</feature>
<feature type="mutagenesis site" description="Abolishes PKA-mediated modulation of cell surface expression and channel activity." evidence="13 37">
    <original>S</original>
    <variation>A</variation>
    <location>
        <position position="552"/>
    </location>
</feature>
<feature type="mutagenesis site" description="Abolishes interaction with DLG4." evidence="12 19">
    <location>
        <begin position="627"/>
        <end position="630"/>
    </location>
</feature>
<feature type="helix" evidence="73">
    <location>
        <begin position="1"/>
        <end position="6"/>
    </location>
</feature>
<feature type="helix" evidence="73">
    <location>
        <begin position="9"/>
        <end position="17"/>
    </location>
</feature>
<feature type="strand" evidence="72">
    <location>
        <begin position="43"/>
        <end position="47"/>
    </location>
</feature>
<feature type="strand" evidence="72">
    <location>
        <begin position="50"/>
        <end position="54"/>
    </location>
</feature>
<feature type="helix" evidence="72">
    <location>
        <begin position="56"/>
        <end position="60"/>
    </location>
</feature>
<feature type="strand" evidence="72">
    <location>
        <begin position="64"/>
        <end position="66"/>
    </location>
</feature>
<feature type="helix" evidence="72">
    <location>
        <begin position="70"/>
        <end position="75"/>
    </location>
</feature>
<feature type="helix" evidence="72">
    <location>
        <begin position="78"/>
        <end position="80"/>
    </location>
</feature>
<feature type="strand" evidence="72">
    <location>
        <begin position="81"/>
        <end position="85"/>
    </location>
</feature>
<feature type="turn" evidence="72">
    <location>
        <begin position="89"/>
        <end position="91"/>
    </location>
</feature>
<feature type="helix" evidence="72">
    <location>
        <begin position="92"/>
        <end position="101"/>
    </location>
</feature>
<feature type="helix" evidence="72">
    <location>
        <begin position="112"/>
        <end position="122"/>
    </location>
</feature>
<feature type="helix" evidence="72">
    <location>
        <begin position="131"/>
        <end position="145"/>
    </location>
</feature>
<organism>
    <name type="scientific">Rattus norvegicus</name>
    <name type="common">Rat</name>
    <dbReference type="NCBI Taxonomy" id="10116"/>
    <lineage>
        <taxon>Eukaryota</taxon>
        <taxon>Metazoa</taxon>
        <taxon>Chordata</taxon>
        <taxon>Craniata</taxon>
        <taxon>Vertebrata</taxon>
        <taxon>Euteleostomi</taxon>
        <taxon>Mammalia</taxon>
        <taxon>Eutheria</taxon>
        <taxon>Euarchontoglires</taxon>
        <taxon>Glires</taxon>
        <taxon>Rodentia</taxon>
        <taxon>Myomorpha</taxon>
        <taxon>Muroidea</taxon>
        <taxon>Muridae</taxon>
        <taxon>Murinae</taxon>
        <taxon>Rattus</taxon>
    </lineage>
</organism>
<comment type="function">
    <text evidence="2 3 5 11 13 15 16 20 23 24 27 28 29 30 32 33 36 39 40 41 46 49 51 53 58">Voltage-gated potassium channel that mediates transmembrane potassium transport in excitable membranes, primarily in the brain, but also in rodent heart (PubMed:10676964, PubMed:12592409, PubMed:12754210, PubMed:14980206, PubMed:16123112, PubMed:16207878, PubMed:1722463, PubMed:1840649, PubMed:19279261, PubMed:25352783, PubMed:9058605, PubMed:9093524). Mediates the major part of the dendritic A-type current I(SA) in brain neurons (PubMed:16207878, PubMed:17026528). This current is activated at membrane potentials that are below the threshold for action potentials. It regulates neuronal excitability, prolongs the latency before the first spike in a series of action potentials, regulates the frequency of repetitive action potential firing, shortens the duration of action potentials and regulates the back-propagation of action potentials from the neuronal cell body to the dendrites. Contributes to the regulation of the circadian rhythm of action potential firing in suprachiasmatic nucleus neurons, which regulates the circadian rhythm of locomotor activity (By similarity). Functions downstream of the metabotropic glutamate receptor GRM5 and plays a role in neuronal excitability and in nociception mediated by activation of GRM5 (By similarity). Mediates the transient outward current I(to) in rodent heart left ventricle apex cells, but not in human heart, where this current is mediated by another family member (PubMed:9058605, PubMed:9093524). Forms tetrameric potassium-selective channels through which potassium ions pass in accordance with their electrochemical gradient. The channel alternates between opened and closed conformations in response to the voltage difference across the membrane (PubMed:10676964, PubMed:12451113, PubMed:12592409, PubMed:12754210, PubMed:14980206, PubMed:15452711, PubMed:16207878, PubMed:16820361, PubMed:1722463, PubMed:1840649, PubMed:25352783, PubMed:9093524). Can form functional homotetrameric channels and heterotetrameric channels that contain variable proportions of KCND2 and KCND3; channel properties depend on the type of pore-forming alpha subunits that are part of the channel (PubMed:25352783). In vivo, membranes probably contain a mixture of heteromeric potassium channel complexes (PubMed:12451113, PubMed:16123112). Interaction with specific isoforms of the regulatory subunits KCNIP1, KCNIP2, KCNIP3 or KCNIP4 strongly increases expression at the cell surface and thereby increases channel activity; it modulates the kinetics of channel activation and inactivation, shifts the threshold for channel activation to more negative voltage values, shifts the threshold for inactivation to less negative voltages and accelerates recovery after inactivation (PubMed:12451113, PubMed:14980206, PubMed:15452711, PubMed:16123112, PubMed:16820361, PubMed:20045463). Likewise, interaction with DPP6 or DPP10 promotes expression at the cell membrane and regulates both channel characteristics and activity (PubMed:15671030, PubMed:16123112, PubMed:19279261, PubMed:19441798, PubMed:19901547). Upon depolarization, the channel goes from a resting closed state (C state) to an activated but non-conducting state (C* state), from there, the channel may either inactivate (I state) or open (O state) (By similarity).</text>
</comment>
<comment type="catalytic activity">
    <reaction evidence="13 16 20 23 24 25 27 28 29 30 32 33 34 36 41 42 51 53">
        <text>K(+)(in) = K(+)(out)</text>
        <dbReference type="Rhea" id="RHEA:29463"/>
        <dbReference type="ChEBI" id="CHEBI:29103"/>
    </reaction>
</comment>
<comment type="activity regulation">
    <text evidence="32 36 51 53">Inhibited by 5 mM 4-aminopyridine (4-AP) (PubMed:1722463, PubMed:1840649, PubMed:9093524). Not inhibited by dendrotoxins and by tetraethylammonium (TEA) (PubMed:1722463). Inhibited by 10 mM flecainide and 20 mM quinidine (PubMed:9093524). Inhibited by the heteropodatoxins HpTx(1), HpTx(2), and HpTx(3) (PubMed:9058605).</text>
</comment>
<comment type="biophysicochemical properties">
    <kinetics>
        <text evidence="13 32 39 41 53 62">Homotetrameric channels activate rapidly, i.e within a few msec (PubMed:1722463, PubMed:9093524). After that, they inactivate rapidly, i.e within about 50-100 msec (PubMed:1722463, PubMed:9093524). The voltage-dependence of activation and inactivation and other channel characteristics vary depending on the experimental conditions, the expression system and the presence or absence of ancillary subunits (PubMed:19279261, PubMed:19901547). Homotetrameric channels have a unitary conductance of about 4 pS when expressed in a heterologous system (PubMed:19279261). For the activation of homotetrameric channels expressed in xenopus oocytes, the voltage at half-maximal amplitude is about -10 mV (PubMed:12451113). The time constant for inactivation is about 20 msec (PubMed:12451113). For inactivation, the voltage at half-maximal amplitude is -62 mV (PubMed:12451113). The time constant for recovery after inactivation is about 70 msec (PubMed:12451113).</text>
    </kinetics>
</comment>
<comment type="subunit">
    <text evidence="2 3 5 9 10 11 12 13 14 16 19 20 21 22 23 24 25 27 28 29 38 43 48 49 66 67">Homotetramer or heterotetramer with KCND1 or KCND3 (PubMed:12754210, PubMed:15485870, PubMed:20224290, PubMed:25352783). Associates with the regulatory subunits KCNIP2, KCNIP3 and KCNIP4 (PubMed:10676964, PubMed:11805342, PubMed:11847232, PubMed:12451113, PubMed:14980206, PubMed:15356203, PubMed:15452711, PubMed:15485870, PubMed:16820361, PubMed:20045463, PubMed:24811166). Interacts with the regulatory subunit KCNIP1; this interaction mediates the capture of both the N- and C-terminus of KCND2, preventing N-type inactivation and stabilizing the S6 conformation, thereby accelerating closed state inactivation and recovery (PubMed:14980206, PubMed:14980207, PubMed:15356203). Interacts with DPP10, DLG4 and DLG1 (PubMed:11923279, PubMed:14559911, PubMed:15671030, PubMed:19213956). In vivo, probably exists as heteromeric complex containing variable proportions of KCND1, KCND2, KCND3, KCNIP1, KCNIP2, KCNIP3, KCNIP4, DPP6 and DPP10 (PubMed:16123112, PubMed:19901547). The tetrameric channel can associate with up to four regulatory subunits, such as KCNIP2 or KCNIP4 (By similarity). Interaction with KCNIP3 promotes tetramerization and formation of a functional potassium channel (PubMed:15485870). Interaction with four KCNIP4 chains does not reduce interaction with DPP10 (By similarity). Probably part of a complex consisting of KCNIP1, KCNIP2 isoform 3 and KCND2 (By similarity). Interacts with FLNA and FLNC (PubMed:11102480). Interacts with NCS1/FREQ (By similarity). Identified in a complex with cAMP-dependent protein kinase (PKA), CAV3, AKAP6 and KCND3 in cardiac myocytes (PubMed:20224290). Interacts (via S1 and S2 helices) with DPP6; this interaction stabilizes the conformation of the S1-S2 helices and facilitates S4 conformational change, including S4 sliding up and down, thereby accelerating activation, inactivation, and recovery (PubMed:12575952, PubMed:15671030).</text>
</comment>
<comment type="subcellular location">
    <subcellularLocation>
        <location evidence="5 7 9 11 13 15 16 17 19 20 23 24 25 26 27 29 32 33 35 36 37 42 44 47 49 52 53">Cell membrane</location>
        <topology evidence="58">Multi-pass membrane protein</topology>
    </subcellularLocation>
    <subcellularLocation>
        <location evidence="5 9 15 26 28 33 35 43 44 45 46 52">Cell projection</location>
        <location evidence="5 9 15 26 28 33 35 43 44 45 46 52">Dendrite</location>
    </subcellularLocation>
    <subcellularLocation>
        <location evidence="9 26 33 52">Synapse</location>
    </subcellularLocation>
    <subcellularLocation>
        <location evidence="5 26 28 35 44 52">Perikaryon</location>
    </subcellularLocation>
    <subcellularLocation>
        <location evidence="26 52">Postsynaptic cell membrane</location>
    </subcellularLocation>
    <subcellularLocation>
        <location evidence="33 37 44 45 52">Cell projection</location>
        <location evidence="33 37 44 45 52">Dendritic spine</location>
    </subcellularLocation>
    <subcellularLocation>
        <location evidence="7">Cell membrane</location>
        <location evidence="7">Sarcolemma</location>
    </subcellularLocation>
    <subcellularLocation>
        <location evidence="35">Cell junction</location>
    </subcellularLocation>
    <subcellularLocation>
        <location evidence="43">Membrane</location>
        <location evidence="43">Caveola</location>
    </subcellularLocation>
    <text evidence="3 16 19 20 24 28 29 33 37 40 42 43 44 47 52 58">In neurons, primarily detected on dendrites, dendritic spines and on the neuron cell body, but not on axons (PubMed:16207878, PubMed:17582333, PubMed:22098631, PubMed:9070739). Localized preferentially at the dendrites of pyramidal cells in the hippocampus CA1 layer (PubMed:22098631). Detected at GABAergic synapses (By similarity). Detected at cell junctions that are distinct from synaptic cell contacts (PubMed:18371079). Detected in lipid rafts (PubMed:14559911, PubMed:20224290, PubMed:24793047). Detected primarily at the endoplasmic reticulum or Golgi when expressed by itself (PubMed:12754210, PubMed:12829703, PubMed:14980206, PubMed:16820361, PubMed:19441798). Interaction with KCNIP1, KCNIP2, KCNIP3 or KCNIP4 promotes expression at the cell membrane (PubMed:12829703, PubMed:14980206, PubMed:15485870, PubMed:20045463). Interaction with DPP6 or DPP10 promotes expression at the cell membrane (PubMed:19441798). Internalized from the cell membrane by clathrin-dependent endocytosis in response to activation of AMPA-selective glutamate receptors and PKA-mediated phosphorylation at Ser-552 (PubMed:17582333, PubMed:18650329). Redistributed from dendritic spines to the main dendritic shaft in response to activation of AMPA-selective glutamate receptors and activation of PKA (PubMed:17582333, PubMed:18650329).</text>
</comment>
<comment type="tissue specificity">
    <text evidence="5 9 26 27 28 31 35 36 44 47 52">Detected in brain cortex, hippocampus, dentate gyrus, thalamus and cerebellum (PubMed:16123112). Detected in neurons from the primary visual cortex (PubMed:16207878). Detected in the supraoptic nucleus in hypothalamus, in hippocampus and the habenular nucleus of the thalamus (PubMed:9070739). Detected in the bed nucleus of the stria terminalis (PubMed:24037673). Detected in dendritic fields in the hippocampus CA1 layer, in stratum radiatum, stratum oriens, stratum lacunosum-moleculare and stratum pyramidale (PubMed:10676964, PubMed:22098631). Detected in dendritic fields in the hippocampus CA3 layer and in dentate gyrus (PubMed:10676964). Detected in the cerebellum granule cell layer, where it localizes at synapses (PubMed:10676964, PubMed:11102480, PubMed:15736227). Detected in the main olfactory bulb, especially in the granule cell layer and the external plexiform layer, but also the mitral layer (PubMed:18371079). Detected in heart atrium and ventricle (PubMed:10860776). Detected in heart left ventricle (at protein level) (PubMed:24793047). Highly expressed in heart and throughout the brain, with similar levels in cortex and hypothalamus, and much higher levels in hippocampus, dentate gyrus and the habenular nucleus of the thalamus. Detected in brain, and at lower levels in heart atrium and ventricle (PubMed:1705709). Detected in neurons from the bed nucleus of the stria terminalis (PubMed:24037673). Detected in aorta, cardiac and smooth muscle.</text>
</comment>
<comment type="induction">
    <text evidence="49">Down-regulated in response to hypoxia lasting about 15 minutes, a treatment that leads to spontaneous convulsive seizures in these pups.</text>
</comment>
<comment type="domain">
    <text evidence="1">The transmembrane segment S4 functions as a voltage-sensor and is characterized by a series of positively charged amino acids at every third position. Channel opening and closing is effected by a conformation change that affects the position and orientation of the voltage-sensor paddle formed by S3 and S4 within the membrane. A transmembrane electric field that is positive inside would push the positively charged S4 segment outwards, thereby opening the pore, while a field that is negative inside would pull the S4 segment inwards and close the pore. Changes in the position and orientation of S4 are then transmitted to the activation gate formed by the inner helix bundle via the S4-S5 linker region.</text>
</comment>
<comment type="domain">
    <text evidence="2 16 29 59 61 65">The N-terminal cytoplasmic region can mediate N-type inactivation by physically blocking the channel (PubMed:15452711). This probably does not happen in vivo, where the N-terminal region mediates interaction with regulatory subunits, such as KCNIP1 and KCNIP2 (PubMed:14980206, PubMed:16820361, PubMed:18357523). The zinc binding sites in the N-terminal domain are important for tetramerization and assembly of a functional channel complex (PubMed:12754210). The channel undergoes closed-state inactivation, where conformation changes lead to inactivation through an intermediate state involving breakdown of its 4-fold symmetry. that governs the distinct transient, fast-inactivating currents (By similarity).</text>
</comment>
<comment type="domain">
    <text evidence="29">The C-terminal cytoplasmic region is important for normal expression at the cell membrane and modulates the voltage-dependence of channel activation and inactivation. It is required for interaction with KCNIP2, and probably other family members as well.</text>
</comment>
<comment type="PTM">
    <text evidence="3 13 33 40 46">Phosphorylation at Ser-438 in response to MAPK activation is increased in stimulated dendrites (PubMed:24404150). Interaction with KCNIP2 and DPP6 propomtes phosphorylation by PKA at Ser-552 (PubMed:19441798). Phosphorylation at Ser-552 has no effect on interaction with KCNIP3, but is required for the regulation of channel activity by KCNIP3 (PubMed:12451113). Phosphorylation at Ser-552 leads to KCND2 internalization (PubMed:17582333). Phosphorylated by MAPK in response to signaling via the metabotropic glutamate receptor GRM5 (By similarity). Phosphorylation at Ser-616 is required for the down-regulation of neuronal A-type currents in response to signaling via GRM5 (By similarity).</text>
</comment>
<comment type="miscellaneous">
    <text evidence="53 64 65">The transient neuronal A-type potassium current called I(SA) is triggered at membrane potentials that are below the threshold for action potentials. It inactivates rapidly and recovers rapidly from inactivation. It regulates the firing of action potentials and plays a role in synaptic integration and plasticity. Potassium channels containing KCND2 account for about 80% of the neuronal A-type potassium current. In contrast, the potassium channel responsible for the cardiac I(to) current differs between species; it is mediated by KCND2 in rodents. In human and other non-rodents KCND3 may play an equivalent role.</text>
</comment>
<comment type="miscellaneous">
    <text evidence="50">Is specifically and reversibly inhibited by the scorpion toxin Ts8 (AC P69940).</text>
</comment>
<comment type="similarity">
    <text evidence="58">Belongs to the potassium channel family. D (Shal) (TC 1.A.1.2) subfamily. Kv4.2/KCND2 sub-subfamily.</text>
</comment>
<comment type="sequence caution" evidence="58">
    <conflict type="frameshift">
        <sequence resource="EMBL-CDS" id="AAA40929"/>
    </conflict>
</comment>
<reference key="1">
    <citation type="journal article" date="1991" name="Neuron">
        <title>Characterization of a mammalian cDNA for an inactivating voltage-sensitive K+ channel.</title>
        <authorList>
            <person name="Baldwin T.J."/>
            <person name="Tsaur M.-L."/>
            <person name="Lopez G.A."/>
            <person name="Jan Y.N."/>
            <person name="Jan L.Y."/>
        </authorList>
    </citation>
    <scope>NUCLEOTIDE SEQUENCE [MRNA]</scope>
    <scope>FUNCTION</scope>
    <scope>TRANSPORTER ACTIVITY</scope>
    <scope>ACTIVITY REGULATION</scope>
    <scope>SUBCELLULAR LOCATION</scope>
    <scope>TISSUE SPECIFICITY</scope>
    <source>
        <tissue>Hippocampus</tissue>
    </source>
</reference>
<reference key="2">
    <citation type="journal article" date="1991" name="Proc. Natl. Acad. Sci. U.S.A.">
        <title>Cloning and tissue-specific expression of five voltage-gated potassium channel cDNAs expressed in rat heart.</title>
        <authorList>
            <person name="Roberds S.L."/>
            <person name="Tamkun M.M."/>
        </authorList>
    </citation>
    <scope>NUCLEOTIDE SEQUENCE [MRNA]</scope>
    <scope>TISSUE SPECIFICITY</scope>
    <source>
        <strain>Sprague-Dawley</strain>
        <tissue>Heart</tissue>
    </source>
</reference>
<reference key="3">
    <citation type="journal article" date="1991" name="FEBS Lett.">
        <title>Functional characterization of RK5, a voltage-gated K+ channel cloned from the rat cardiovascular system.</title>
        <authorList>
            <person name="Blair T.A."/>
            <person name="Roberds S.L."/>
            <person name="Tamkun M.M."/>
            <person name="Hartshorne R.P."/>
        </authorList>
    </citation>
    <scope>FUNCTION</scope>
    <scope>TRANSPORTER ACTIVITY</scope>
    <scope>ACTIVITY REGULATION</scope>
    <scope>SUBCELLULAR LOCATION</scope>
    <scope>BIOPHYSICOCHEMICAL PROPERTIES</scope>
</reference>
<reference key="4">
    <citation type="journal article" date="1997" name="Cardiovasc. Res.">
        <title>Electrophysiological and pharmacological correspondence between Kv4.2 current and rat cardiac transient outward current.</title>
        <authorList>
            <person name="Yeola S.W."/>
            <person name="Snyders D.J."/>
        </authorList>
    </citation>
    <scope>FUNCTION</scope>
    <scope>TRANSPORTER ACTIVITY</scope>
    <scope>ACTIVITY REGULATION</scope>
    <scope>SUBCELLULAR LOCATION</scope>
    <scope>BIOPHYSICOCHEMICAL PROPERTIES</scope>
</reference>
<reference key="5">
    <citation type="journal article" date="1997" name="Mol. Pharmacol.">
        <title>Heteropodatoxins: peptides isolated from spider venom that block Kv4.2 potassium channels.</title>
        <authorList>
            <person name="Sanguinetti M.C."/>
            <person name="Johnson J.H."/>
            <person name="Hammerland L.G."/>
            <person name="Kelbaugh P.R."/>
            <person name="Volkmann R.A."/>
            <person name="Saccomano N.A."/>
            <person name="Mueller A.L."/>
        </authorList>
    </citation>
    <scope>FUNCTION</scope>
    <scope>TRANSPORTER ACTIVITY</scope>
    <scope>ACTIVITY REGULATION</scope>
    <scope>SUBCELLULAR LOCATION</scope>
</reference>
<reference key="6">
    <citation type="journal article" date="1997" name="Neuroscience">
        <title>Clustering of KV4.2 potassium channels in postsynaptic membrane of rat supraoptic neurons: an ultrastructural study.</title>
        <authorList>
            <person name="Alonso G."/>
            <person name="Widmer H."/>
        </authorList>
    </citation>
    <scope>SUBCELLULAR LOCATION</scope>
    <scope>TISSUE SPECIFICITY</scope>
</reference>
<reference key="7">
    <citation type="journal article" date="2000" name="J. Biol. Chem.">
        <title>Kv4.2 phosphorylation by cyclic AMP-dependent protein kinase.</title>
        <authorList>
            <person name="Anderson A.E."/>
            <person name="Adams J.P."/>
            <person name="Qian Y."/>
            <person name="Cook R.G."/>
            <person name="Pfaffinger P.J."/>
            <person name="Sweatt J.D."/>
        </authorList>
    </citation>
    <scope>PHOSPHORYLATION AT THR-38 AND SER-552 BY PKACA</scope>
</reference>
<reference key="8">
    <citation type="journal article" date="2000" name="J. Mol. Cell. Cardiol.">
        <title>Voltage-gated K(+)Channel, Kv4.2, localizes predominantly to the transverse-axial tubular system of the rat myocyte.</title>
        <authorList>
            <person name="Takeuchi S."/>
            <person name="Takagishi Y."/>
            <person name="Yasui K."/>
            <person name="Murata Y."/>
            <person name="Toyama J."/>
            <person name="Kodama I."/>
        </authorList>
    </citation>
    <scope>SUBCELLULAR LOCATION</scope>
    <scope>TISSUE SPECIFICITY</scope>
</reference>
<reference key="9">
    <citation type="journal article" date="2000" name="J. Neurochem.">
        <title>The A-type potassium channel Kv4.2 is a substrate for the mitogen-activated protein kinase ERK.</title>
        <authorList>
            <person name="Adams J.P."/>
            <person name="Anderson A.E."/>
            <person name="Varga A.W."/>
            <person name="Dineley K.T."/>
            <person name="Cook R.G."/>
            <person name="Pfaffinger P.J."/>
            <person name="Sweatt J.D."/>
        </authorList>
    </citation>
    <scope>PHOSPHORYLATION AT THR-602; THR-607 AND SER-616</scope>
</reference>
<reference key="10">
    <citation type="journal article" date="2000" name="J. Neurosci.">
        <title>Localization and enhanced current density of the Kv4.2 potassium channel by interaction with the actin-binding protein filamin.</title>
        <authorList>
            <person name="Petrecca K."/>
            <person name="Miller D.M."/>
            <person name="Shrier A."/>
        </authorList>
    </citation>
    <scope>SUBCELLULAR LOCATION</scope>
    <scope>TISSUE SPECIFICITY</scope>
    <scope>INTERACTION WITH FILAMIN</scope>
</reference>
<reference key="11">
    <citation type="journal article" date="2000" name="Nature">
        <title>Modulation of A-type potassium channels by a family of calcium sensors.</title>
        <authorList>
            <person name="An W.F."/>
            <person name="Bowlby M.R."/>
            <person name="Betty M."/>
            <person name="Cao J."/>
            <person name="Ling H.-P."/>
            <person name="Mendoza G."/>
            <person name="Hinson J.W."/>
            <person name="Mattsson K.I."/>
            <person name="Strassle B.W."/>
            <person name="Trimmer J.S."/>
            <person name="Rhodes K.J."/>
        </authorList>
    </citation>
    <scope>INTERACTION WITH KCNIP1; KCNIP2 AND KCNIP3</scope>
    <scope>SUBCELLULAR LOCATION</scope>
    <scope>TISSUE SPECIFICITY</scope>
</reference>
<reference key="12">
    <citation type="journal article" date="2002" name="J. Neurosci.">
        <title>PKA modulation of Kv4.2-encoded A-type potassium channels requires formation of a supramolecular complex.</title>
        <authorList>
            <person name="Schrader L.A."/>
            <person name="Anderson A.E."/>
            <person name="Mayne A."/>
            <person name="Pfaffinger P.J."/>
            <person name="Sweatt J.D."/>
        </authorList>
    </citation>
    <scope>FUNCTION</scope>
    <scope>TRANSPORTER ACTIVITY</scope>
    <scope>BIOPHYSICOCHEMICAL PROPERTIES</scope>
    <scope>INTERACTION WITH KCNIP3</scope>
    <scope>SUBCELLULAR LOCATION</scope>
    <scope>MUTAGENESIS OF SER-552</scope>
    <scope>PHOSPHORYLATION AT SER-552</scope>
</reference>
<reference key="13">
    <citation type="journal article" date="2002" name="J. Biol. Chem.">
        <title>Molecular cloning and characterization of CALP/KChIP4, a novel EF-hand protein interacting with presenilin 2 and voltage-gated potassium channel subunit Kv4.</title>
        <authorList>
            <person name="Morohashi Y."/>
            <person name="Hatano N."/>
            <person name="Ohya S."/>
            <person name="Takikawa R."/>
            <person name="Watabiki T."/>
            <person name="Takasugi N."/>
            <person name="Imaizumi Y."/>
            <person name="Tomita T."/>
            <person name="Iwatsubo T."/>
        </authorList>
    </citation>
    <scope>INTERACTION WITH KCNIP4</scope>
    <scope>FUNCTION</scope>
    <scope>SUBCELLULAR LOCATION</scope>
</reference>
<reference key="14">
    <citation type="journal article" date="2002" name="J. Biol. Chem.">
        <title>Cell surface targeting and clustering interactions between heterologously expressed PSD-95 and the Shal voltage-gated potassium channel, Kv4.2.</title>
        <authorList>
            <person name="Wong W."/>
            <person name="Newell E.W."/>
            <person name="Jugloff D.G.M."/>
            <person name="Jones O.T."/>
            <person name="Schlichter L.C."/>
        </authorList>
    </citation>
    <scope>MUTAGENESIS OF 627-VAL--LEU-630</scope>
    <scope>INTERACTION WITH DLG4</scope>
    <scope>SUBCELLULAR LOCATION</scope>
</reference>
<reference key="15">
    <citation type="journal article" date="2002" name="Proc. Natl. Acad. Sci. U.S.A.">
        <title>Elimination of fast inactivation in Kv4 A-type potassium channels by an auxiliary subunit domain.</title>
        <authorList>
            <person name="Holmqvist M.H."/>
            <person name="Cao J."/>
            <person name="Hernandez-Pineda R."/>
            <person name="Jacobson M.D."/>
            <person name="Carroll K.I."/>
            <person name="Sung M.A."/>
            <person name="Betty M."/>
            <person name="Ge P."/>
            <person name="Gilbride K.J."/>
            <person name="Brown M.E."/>
            <person name="Jurman M.E."/>
            <person name="Lawson D."/>
            <person name="Silos-Santiago I."/>
            <person name="Xie Y."/>
            <person name="Covarrubias M."/>
            <person name="Rhodes K.J."/>
            <person name="Distefano P.S."/>
            <person name="An W.F."/>
        </authorList>
    </citation>
    <scope>INTERACTION WITH KCNIP4</scope>
</reference>
<reference key="16">
    <citation type="journal article" date="2003" name="J. Biol. Chem.">
        <title>A fundamental role for KChIPs in determining the molecular properties and trafficking of Kv4.2 potassium channels.</title>
        <authorList>
            <person name="Shibata R."/>
            <person name="Misonou H."/>
            <person name="Campomanes C.R."/>
            <person name="Anderson A.E."/>
            <person name="Schrader L.A."/>
            <person name="Doliveira L.C."/>
            <person name="Carroll K.I."/>
            <person name="Sweatt J.D."/>
            <person name="Rhodes K.J."/>
            <person name="Trimmer J.S."/>
        </authorList>
    </citation>
    <scope>PHOSPHORYLATION AT SER-552</scope>
    <scope>SUBCELLULAR LOCATION</scope>
</reference>
<reference key="17">
    <citation type="journal article" date="2003" name="Nat. Neurosci.">
        <title>An evolutionarily conserved dileucine motif in Shal K+ channels mediates dendritic targeting.</title>
        <authorList>
            <person name="Rivera J.F."/>
            <person name="Ahmad S."/>
            <person name="Quick M.W."/>
            <person name="Liman E.R."/>
            <person name="Arnold D.B."/>
        </authorList>
    </citation>
    <scope>SUBCELLULAR LOCATION</scope>
    <scope>DENDRITIC TARGETING REGION</scope>
    <scope>MUTAGENESIS OF 481-LEU--LEU-482</scope>
    <scope>FUNCTION</scope>
</reference>
<reference key="18">
    <citation type="journal article" date="2003" name="Neuron">
        <title>The CD26-related dipeptidyl aminopeptidase-like protein DPPX is a critical component of neuronal A-type K+ channels.</title>
        <authorList>
            <person name="Nadal M.S."/>
            <person name="Ozaita A."/>
            <person name="Amarillo Y."/>
            <person name="Vega-Saenz de Miera E."/>
            <person name="Ma Y."/>
            <person name="Mo W."/>
            <person name="Goldberg E.M."/>
            <person name="Misumi Y."/>
            <person name="Ikehara Y."/>
            <person name="Neubert T.A."/>
            <person name="Rudy B."/>
        </authorList>
    </citation>
    <scope>INTERACTION WITH DPP6</scope>
</reference>
<reference key="19">
    <citation type="journal article" date="2003" name="J. Biol. Chem.">
        <title>The role of Zn2+ in Shal voltage-gated potassium channel formation.</title>
        <authorList>
            <person name="Strang C."/>
            <person name="Kunjilwar K."/>
            <person name="DeRubeis D."/>
            <person name="Peterson D."/>
            <person name="Pfaffinger P.J."/>
        </authorList>
    </citation>
    <scope>SUBUNIT</scope>
    <scope>ZINC-BINDING</scope>
    <scope>SUBCELLULAR LOCATION</scope>
    <scope>FUNCTION</scope>
    <scope>TRANSPORTER ACTIVITY</scope>
    <scope>MUTAGENESIS OF HIS-105; CYS-111; CYS-132 AND CYS-133</scope>
</reference>
<reference key="20">
    <citation type="journal article" date="2004" name="J. Biol. Chem.">
        <title>Differential recruitment of Kv1.4 and Kv4.2 to lipid rafts by PSD-95.</title>
        <authorList>
            <person name="Wong W."/>
            <person name="Schlichter L.C."/>
        </authorList>
    </citation>
    <scope>MUTAGENESIS OF 627-VAL--LEU-630</scope>
    <scope>INTERACTION WITH DLG4</scope>
    <scope>SUBCELLULAR LOCATION</scope>
</reference>
<reference key="21">
    <citation type="journal article" date="2004" name="J. Biol. Chem.">
        <title>KChIP3 rescues the functional expression of Shal channel tetramerization mutants.</title>
        <authorList>
            <person name="Kunjilwar K."/>
            <person name="Strang C."/>
            <person name="DeRubeis D."/>
            <person name="Pfaffinger P.J."/>
        </authorList>
    </citation>
    <scope>FUNCTION</scope>
    <scope>TRANSPORTER ACTIVITY</scope>
    <scope>INTERACTION WITH KCNIP3</scope>
    <scope>SUBCELLULAR LOCATION</scope>
</reference>
<reference key="22">
    <citation type="journal article" date="2004" name="J. Neurosci.">
        <title>KChIPs and Kv4 alpha subunits as integral components of A-type potassium channels in mammalian brain.</title>
        <authorList>
            <person name="Rhodes K.J."/>
            <person name="Carroll K.I."/>
            <person name="Sung M.A."/>
            <person name="Doliveira L.C."/>
            <person name="Monaghan M.M."/>
            <person name="Burke S.L."/>
            <person name="Strassle B.W."/>
            <person name="Buchwalder L."/>
            <person name="Menegola M."/>
            <person name="Cao J."/>
            <person name="An W.F."/>
            <person name="Trimmer J.S."/>
        </authorList>
    </citation>
    <scope>INTERACTION WITH KCNIP1 AND KCNIP3</scope>
</reference>
<reference key="23">
    <citation type="journal article" date="2004" name="Neuron">
        <title>Two N-terminal domains of Kv4 K(+) channels regulate binding to and modulation by KChIP1.</title>
        <authorList>
            <person name="Scannevin R.H."/>
            <person name="Wang K."/>
            <person name="Jow F."/>
            <person name="Megules J."/>
            <person name="Kopsco D.C."/>
            <person name="Edris W."/>
            <person name="Carroll K.C."/>
            <person name="Lu Q."/>
            <person name="Xu W."/>
            <person name="Xu Z."/>
            <person name="Katz A.H."/>
            <person name="Olland S."/>
            <person name="Lin L."/>
            <person name="Taylor M."/>
            <person name="Stahl M."/>
            <person name="Malakian K."/>
            <person name="Somers W."/>
            <person name="Mosyak L."/>
            <person name="Bowlby M.R."/>
            <person name="Chanda P."/>
            <person name="Rhodes K.J."/>
        </authorList>
    </citation>
    <scope>INTERACTION WITH KCNIP1</scope>
    <scope>MUTAGENESIS OF 7-ALA--PHE-11; GLU-71; ASP-73; PHE-74 AND GLU-79</scope>
</reference>
<reference key="24">
    <citation type="journal article" date="2004" name="Pflugers Arch.">
        <title>The Kv4.2 N-terminal restores fast inactivation and confers KChlP2 modulatory effects on N-terminal-deleted Kv1.4 channels.</title>
        <authorList>
            <person name="Pourrier M."/>
            <person name="Herrera D."/>
            <person name="Caballero R."/>
            <person name="Schram G."/>
            <person name="Wang Z."/>
            <person name="Nattel S."/>
        </authorList>
    </citation>
    <scope>FUNCTION</scope>
    <scope>TRANSPORTER ACTIVITY</scope>
    <scope>SUBCELLULAR LOCATION</scope>
    <scope>INTERACTION WITH KCNIP2</scope>
    <scope>DOMAIN</scope>
</reference>
<reference key="25">
    <citation type="journal article" date="2005" name="Cell Biochem. Biophys.">
        <title>Molecular determinants of voltage-gated potassium currents in vascular smooth muscle.</title>
        <authorList>
            <person name="Cox R.H."/>
        </authorList>
    </citation>
    <scope>REVIEW</scope>
</reference>
<reference key="26">
    <citation type="journal article" date="2005" name="J. Biol. Chem.">
        <title>DPP10 modulates Kv4-mediated A-type potassium channels.</title>
        <authorList>
            <person name="Zagha E."/>
            <person name="Ozaita A."/>
            <person name="Chang S.Y."/>
            <person name="Nadal M.S."/>
            <person name="Lin U."/>
            <person name="Saganich M.J."/>
            <person name="McCormack T."/>
            <person name="Akinsanya K.O."/>
            <person name="Qi S.Y."/>
            <person name="Rudy B."/>
        </authorList>
    </citation>
    <scope>FUNCTION</scope>
    <scope>TRANSPORTER ACTIVITY</scope>
    <scope>INTERACTION WITH DPP6 AND DPP10</scope>
    <scope>SUBCELLULAR LOCATION</scope>
</reference>
<reference key="27">
    <citation type="journal article" date="2005" name="J. Comp. Neurol.">
        <title>Light and electron microscopic analysis of KChIP and Kv4 localization in rat cerebellar granule cells.</title>
        <authorList>
            <person name="Strassle B.W."/>
            <person name="Menegola M."/>
            <person name="Rhodes K.J."/>
            <person name="Trimmer J.S."/>
        </authorList>
    </citation>
    <scope>SUBCELLULAR LOCATION</scope>
    <scope>TISSUE SPECIFICITY</scope>
</reference>
<reference key="28">
    <citation type="journal article" date="2005" name="J. Neurosci.">
        <title>Functional role of the fast transient outward K+ current IA in pyramidal neurons in (rat) primary visual cortex.</title>
        <authorList>
            <person name="Yuan W."/>
            <person name="Burkhalter A."/>
            <person name="Nerbonne J.M."/>
        </authorList>
    </citation>
    <scope>FUNCTION</scope>
    <scope>TRANSPORTER ACTIVITY</scope>
    <scope>SUBCELLULAR LOCATION</scope>
    <scope>TISSUE SPECIFICITY</scope>
</reference>
<reference key="29">
    <citation type="journal article" date="2005" name="J. Physiol. (Lond.)">
        <title>Multiprotein assembly of Kv4.2, KChIP3 and DPP10 produces ternary channel complexes with ISA-like properties.</title>
        <authorList>
            <person name="Jerng H.H."/>
            <person name="Kunjilwar K."/>
            <person name="Pfaffinger P.J."/>
        </authorList>
    </citation>
    <scope>FUNCTION</scope>
    <scope>TRANSPORTER ACTIVITY</scope>
    <scope>SUBCELLULAR LOCATION</scope>
    <scope>SUBUNIT</scope>
    <scope>TISSUE SPECIFICITY</scope>
</reference>
<reference key="30">
    <citation type="journal article" date="2006" name="J. Biol. Chem.">
        <title>C-terminal domain of Kv4.2 and associated KChIP2 interactions regulate functional expression and gating of Kv4.2.</title>
        <authorList>
            <person name="Han W."/>
            <person name="Nattel S."/>
            <person name="Noguchi T."/>
            <person name="Shrier A."/>
        </authorList>
    </citation>
    <scope>FUNCTION</scope>
    <scope>TRANSPORTER ACTIVITY</scope>
    <scope>SUBCELLULAR LOCATION</scope>
    <scope>INTERACTION WITH KCNIP2</scope>
    <scope>DOMAIN</scope>
</reference>
<reference key="31">
    <citation type="journal article" date="2006" name="J. Neurochem.">
        <title>Manipulating Kv4.2 identifies a specific component of hippocampal pyramidal neuron A-current that depends upon Kv4.2 expression.</title>
        <authorList>
            <person name="Lauver A."/>
            <person name="Yuan L.L."/>
            <person name="Jeromin A."/>
            <person name="Nadin B.M."/>
            <person name="Rodriguez J.J."/>
            <person name="Davies H.A."/>
            <person name="Stewart M.G."/>
            <person name="Wu G.Y."/>
            <person name="Pfaffinger P.J."/>
        </authorList>
    </citation>
    <scope>FUNCTION</scope>
    <scope>TRANSPORTER ACTIVITY</scope>
</reference>
<reference key="32">
    <citation type="journal article" date="2007" name="Mol. Neurobiol.">
        <title>Ionic channel function in action potential generation: current perspective.</title>
        <authorList>
            <person name="Baranauskas G."/>
        </authorList>
    </citation>
    <scope>REVIEW</scope>
</reference>
<reference key="33">
    <citation type="journal article" date="2007" name="Neuron">
        <title>Regulation of dendritic excitability by activity-dependent trafficking of the A-type K+ channel subunit Kv4.2 in hippocampal neurons.</title>
        <authorList>
            <person name="Kim J."/>
            <person name="Jung S.C."/>
            <person name="Clemens A.M."/>
            <person name="Petralia R.S."/>
            <person name="Hoffman D.A."/>
        </authorList>
    </citation>
    <scope>FUNCTION</scope>
    <scope>TRANSPORTER ACTIVITY</scope>
    <scope>SUBCELLULAR LOCATION</scope>
</reference>
<reference key="34">
    <citation type="journal article" date="2008" name="Eur. J. Neurosci.">
        <title>Unique clustering of A-type potassium channels on different cell types of the main olfactory bulb.</title>
        <authorList>
            <person name="Kollo M."/>
            <person name="Holderith N."/>
            <person name="Antal M."/>
            <person name="Nusser Z."/>
        </authorList>
    </citation>
    <scope>SUBCELLULAR LOCATION</scope>
    <scope>TISSUE SPECIFICITY</scope>
</reference>
<reference key="35">
    <citation type="journal article" date="2008" name="J. Neurosci.">
        <title>Protein kinase A mediates activity-dependent Kv4.2 channel trafficking.</title>
        <authorList>
            <person name="Hammond R.S."/>
            <person name="Lin L."/>
            <person name="Sidorov M.S."/>
            <person name="Wikenheiser A.M."/>
            <person name="Hoffman D.A."/>
        </authorList>
    </citation>
    <scope>SUBCELLULAR LOCATION</scope>
    <scope>PHOSPHORYLATION AT SER-552</scope>
    <scope>MUTAGENESIS OF SER-552</scope>
</reference>
<reference key="36">
    <citation type="journal article" date="2008" name="J. Physiol. (Lond.)">
        <title>Ternary Kv4.2 channels recapitulate voltage-dependent inactivation kinetics of A-type K+ channels in cerebellar granule neurons.</title>
        <authorList>
            <person name="Amarillo Y."/>
            <person name="De Santiago-Castillo J.A."/>
            <person name="Dougherty K."/>
            <person name="Maffie J."/>
            <person name="Kwon E."/>
            <person name="Covarrubias M."/>
            <person name="Rudy B."/>
        </authorList>
    </citation>
    <scope>FUNCTION</scope>
    <scope>TRANSPORTER ACTIVITY</scope>
    <scope>SUBCELLULAR LOCATION</scope>
    <scope>SUBUNIT</scope>
    <scope>MISCELLANEOUS</scope>
</reference>
<reference key="37">
    <citation type="journal article" date="2008" name="Neurochem. Res.">
        <title>The neuronal Kv4 channel complex.</title>
        <authorList>
            <person name="Covarrubias M."/>
            <person name="Bhattacharji A."/>
            <person name="De Santiago-Castillo J.A."/>
            <person name="Dougherty K."/>
            <person name="Kaulin Y.A."/>
            <person name="Na-Phuket T.R."/>
            <person name="Wang G."/>
        </authorList>
    </citation>
    <scope>REVIEW</scope>
</reference>
<reference key="38">
    <citation type="journal article" date="2009" name="Biochemistry">
        <title>Convergent modulation of Kv4.2 channel alpha subunits by structurally distinct DPPX and KChIP auxiliary subunits.</title>
        <authorList>
            <person name="Seikel E."/>
            <person name="Trimmer J.S."/>
        </authorList>
    </citation>
    <scope>SUBCELLULAR LOCATION</scope>
    <scope>INTERACTION WITH DPP6 AND KCNIP2</scope>
    <scope>PHOSPHORYLATION AT SER-548; SER-552; SER-572 AND SER-575</scope>
    <scope>IDENTIFICATION BY MASS SPECTROMETRY</scope>
    <scope>MUTAGENESIS OF SER-552</scope>
</reference>
<reference key="39">
    <citation type="journal article" date="2009" name="Channels">
        <title>A novel N-terminal motif of dipeptidyl peptidase-like proteins produces rapid inactivation of KV4.2 channels by a pore-blocking mechanism.</title>
        <authorList>
            <person name="Jerng H.H."/>
            <person name="Dougherty K."/>
            <person name="Covarrubias M."/>
            <person name="Pfaffinger P.J."/>
        </authorList>
    </citation>
    <scope>FUNCTION</scope>
    <scope>TRANSPORTER ACTIVITY</scope>
    <scope>SUBUNIT</scope>
    <scope>BIOPHYSICOCHEMICAL PROPERTIES</scope>
</reference>
<reference key="40">
    <citation type="journal article" date="2009" name="Circ. Res.">
        <title>Kv4 potassium channels form a tripartite complex with the anchoring protein SAP97 and CaMKII in cardiac myocytes.</title>
        <authorList>
            <person name="El-Haou S."/>
            <person name="Balse E."/>
            <person name="Neyroud N."/>
            <person name="Dilanian G."/>
            <person name="Gavillet B."/>
            <person name="Abriel H."/>
            <person name="Coulombe A."/>
            <person name="Jeromin A."/>
            <person name="Hatem S.N."/>
        </authorList>
    </citation>
    <scope>INTERACTION WITH DLG1</scope>
</reference>
<reference key="41">
    <citation type="journal article" date="2009" name="J. Neurosci.">
        <title>The dipeptidyl-peptidase-like protein DPP6 determines the unitary conductance of neuronal Kv4.2 channels.</title>
        <authorList>
            <person name="Kaulin Y.A."/>
            <person name="De Santiago-Castillo J.A."/>
            <person name="Rocha C.A."/>
            <person name="Nadal M.S."/>
            <person name="Rudy B."/>
            <person name="Covarrubias M."/>
        </authorList>
    </citation>
    <scope>FUNCTION</scope>
    <scope>BIOPHYSICOCHEMICAL PROPERTIES</scope>
</reference>
<reference key="42">
    <citation type="journal article" date="2010" name="Channels">
        <title>Alpha1-adrenoceptors regulate only the caveolae-located subpopulation of cardiac K(V)4 channels.</title>
        <authorList>
            <person name="Alday A."/>
            <person name="Urrutia J."/>
            <person name="Gallego M."/>
            <person name="Casis O."/>
        </authorList>
    </citation>
    <scope>SUBCELLULAR LOCATION</scope>
    <scope>SUBUNIT</scope>
    <scope>INTERACTION WITH PKA; CAV3; AKAP6 AND KCND3</scope>
    <scope>TISSUE SPECIFICITY</scope>
</reference>
<reference key="43">
    <citation type="journal article" date="2010" name="Mol. Cell. Neurosci.">
        <title>KChIP4a regulates Kv4.2 channel trafficking through PKA phosphorylation.</title>
        <authorList>
            <person name="Lin L."/>
            <person name="Sun W."/>
            <person name="Wikenheiser A.M."/>
            <person name="Kung F."/>
            <person name="Hoffman D.A."/>
        </authorList>
    </citation>
    <scope>FUNCTION</scope>
    <scope>TRANSPORTER ACTIVITY</scope>
    <scope>SUBCELLULAR LOCATION</scope>
    <scope>SUBUNIT</scope>
</reference>
<reference key="44">
    <citation type="journal article" date="2012" name="Eur. J. Neurosci.">
        <title>Unique somato-dendritic distribution pattern of Kv4.2 channels on hippocampal CA1 pyramidal cells.</title>
        <authorList>
            <person name="Kerti K."/>
            <person name="Lorincz A."/>
            <person name="Nusser Z."/>
        </authorList>
    </citation>
    <scope>SUBCELLULAR LOCATION</scope>
    <scope>TISSUE SPECIFICITY</scope>
</reference>
<reference key="45">
    <citation type="journal article" date="2012" name="Nat. Commun.">
        <title>Quantitative maps of protein phosphorylation sites across 14 different rat organs and tissues.</title>
        <authorList>
            <person name="Lundby A."/>
            <person name="Secher A."/>
            <person name="Lage K."/>
            <person name="Nordsborg N.B."/>
            <person name="Dmytriyev A."/>
            <person name="Lundby C."/>
            <person name="Olsen J.V."/>
        </authorList>
    </citation>
    <scope>PHOSPHORYLATION [LARGE SCALE ANALYSIS] AT SER-548; SER-552; SER-572 AND SER-575</scope>
    <scope>IDENTIFICATION BY MASS SPECTROMETRY [LARGE SCALE ANALYSIS]</scope>
</reference>
<reference key="46">
    <citation type="journal article" date="2014" name="Front. Cell. Neurosci.">
        <title>Regulation of Kv4.2 A-type potassium channels in HEK-293 cells by hypoxia.</title>
        <authorList>
            <person name="Liu Y.Q."/>
            <person name="Huang W.X."/>
            <person name="Sanchez R.M."/>
            <person name="Min J.W."/>
            <person name="Hu J.J."/>
            <person name="He X.H."/>
            <person name="Peng B.W."/>
        </authorList>
    </citation>
    <scope>INDUCTION BY HYPOXIA</scope>
    <scope>FUNCTION</scope>
    <scope>SUBCELLULAR LOCATION</scope>
    <scope>SUBUNIT</scope>
</reference>
<reference key="47">
    <citation type="journal article" date="2014" name="J. Comp. Neurol.">
        <title>Distribution and functional expression of Kv4 family alpha subunits and associated KChIP beta subunits in the bed nucleus of the stria terminalis.</title>
        <authorList>
            <person name="Rainnie D.G."/>
            <person name="Hazra R."/>
            <person name="Dabrowska J."/>
            <person name="Guo J.D."/>
            <person name="Li C.C."/>
            <person name="Dewitt S."/>
            <person name="Muly E.C."/>
        </authorList>
    </citation>
    <scope>SUBCELLULAR LOCATION</scope>
    <scope>TISSUE SPECIFICITY</scope>
</reference>
<reference key="48">
    <citation type="journal article" date="2014" name="J. Biol. Chem.">
        <title>The stoichiometry and biophysical properties of the Kv4 potassium channel complex with K+ channel-interacting protein (KChIP) subunits are variable, depending on the relative expression level.</title>
        <authorList>
            <person name="Kitazawa M."/>
            <person name="Kubo Y."/>
            <person name="Nakajo K."/>
        </authorList>
    </citation>
    <scope>INTERACTION WITH KCNIP4</scope>
</reference>
<reference key="49">
    <citation type="journal article" date="2015" name="Pflugers Arch.">
        <title>Localization of Kv4.2 and KChIP2 in lipid rafts and modulation of outward K(+) currents by membrane cholesterol content in rat left ventricular myocytes.</title>
        <authorList>
            <person name="Rudakova E."/>
            <person name="Wagner M."/>
            <person name="Frank M."/>
            <person name="Volk T."/>
        </authorList>
    </citation>
    <scope>SUBCELLULAR LOCATION</scope>
    <scope>TISSUE SPECIFICITY</scope>
</reference>
<reference key="50">
    <citation type="journal article" date="2014" name="PLoS ONE">
        <title>Local plasticity of dendritic excitability can be autonomous of synaptic plasticity and regulated by activity-based phosphorylation of Kv4.2.</title>
        <authorList>
            <person name="Labno A."/>
            <person name="Warrier A."/>
            <person name="Wang S."/>
            <person name="Zhang X."/>
        </authorList>
    </citation>
    <scope>FUNCTION</scope>
    <scope>PHOSPHORYLATION AT SER-438</scope>
    <scope>SUBCELLULAR LOCATION</scope>
</reference>
<reference key="51">
    <citation type="journal article" date="2016" name="Toxicon">
        <title>Ts8 scorpion toxin inhibits the Kv4.2 channel and produces nociception in vivo.</title>
        <authorList>
            <person name="Pucca M.B."/>
            <person name="Cerni F.A."/>
            <person name="Cordeiro F.A."/>
            <person name="Peigneur S."/>
            <person name="Cunha T.M."/>
            <person name="Tytgat J."/>
            <person name="Arantes E.C."/>
        </authorList>
    </citation>
    <scope>SPECIFIC INHIBITION BY SCORPION TOXIN</scope>
</reference>
<reference evidence="69" key="52">
    <citation type="journal article" date="2003" name="Proc. Natl. Acad. Sci. U.S.A.">
        <title>Determining the basis of channel-tetramerization specificity by X-ray crystallography and a sequence-comparison algorithm: family values (FamVal).</title>
        <authorList>
            <person name="Nanao M.H."/>
            <person name="Zhou W."/>
            <person name="Pfaffinger P.J."/>
            <person name="Choe S."/>
        </authorList>
    </citation>
    <scope>X-RAY CRYSTALLOGRAPHY (2.1 ANGSTROMS) OF 42-146 IN COMPLEX WITH ZINC IONS</scope>
    <scope>MUTAGENESIS OF LEU-66 AND ARG-93</scope>
</reference>
<reference evidence="70" key="53">
    <citation type="journal article" date="2004" name="Neuron">
        <title>Structural insights into the functional interaction of KChIP1 with Shal-type K(+) channels.</title>
        <authorList>
            <person name="Zhou W."/>
            <person name="Qian Y."/>
            <person name="Kunjilwar K."/>
            <person name="Pfaffinger P.J."/>
            <person name="Choe S."/>
        </authorList>
    </citation>
    <scope>X-RAY CRYSTALLOGRAPHY (2.0 ANGSTROMS) OF 1-30</scope>
    <scope>FUNCTION</scope>
    <scope>TRANSPORTER ACTIVITY</scope>
    <scope>INTERACTION WITH KCNIP1; KCNIP2 AND KCNIP3</scope>
    <scope>SUBUNIT</scope>
    <scope>SUBCELLULAR LOCATION</scope>
    <scope>MUTAGENESIS OF TRP-8 AND PHE-11</scope>
    <scope>DOMAIN</scope>
</reference>
<gene>
    <name evidence="68" type="primary">Kcnd2</name>
</gene>
<protein>
    <recommendedName>
        <fullName evidence="58">A-type voltage-gated potassium channel KCND2</fullName>
    </recommendedName>
    <alternativeName>
        <fullName>Potassium voltage-gated channel subfamily D member 2</fullName>
    </alternativeName>
    <alternativeName>
        <fullName evidence="54 55">RK5</fullName>
    </alternativeName>
    <alternativeName>
        <fullName evidence="56">Shal1</fullName>
    </alternativeName>
    <alternativeName>
        <fullName evidence="57">Voltage-gated potassium channel subunit Kv4.2</fullName>
    </alternativeName>
</protein>
<dbReference type="EMBL" id="S64320">
    <property type="protein sequence ID" value="AAB19939.1"/>
    <property type="molecule type" value="mRNA"/>
</dbReference>
<dbReference type="EMBL" id="M59980">
    <property type="protein sequence ID" value="AAA40929.1"/>
    <property type="status" value="ALT_FRAME"/>
    <property type="molecule type" value="mRNA"/>
</dbReference>
<dbReference type="PIR" id="I57681">
    <property type="entry name" value="I57681"/>
</dbReference>
<dbReference type="PIR" id="JU0271">
    <property type="entry name" value="JU0271"/>
</dbReference>
<dbReference type="RefSeq" id="NP_113918.2">
    <property type="nucleotide sequence ID" value="NM_031730.2"/>
</dbReference>
<dbReference type="PDB" id="1NN7">
    <property type="method" value="X-ray"/>
    <property type="resolution" value="2.10 A"/>
    <property type="chains" value="A=42-146"/>
</dbReference>
<dbReference type="PDB" id="1S6C">
    <property type="method" value="X-ray"/>
    <property type="resolution" value="2.00 A"/>
    <property type="chains" value="B=1-30"/>
</dbReference>
<dbReference type="PDBsum" id="1NN7"/>
<dbReference type="PDBsum" id="1S6C"/>
<dbReference type="SMR" id="Q63881"/>
<dbReference type="BioGRID" id="249292">
    <property type="interactions" value="2"/>
</dbReference>
<dbReference type="CORUM" id="Q63881"/>
<dbReference type="FunCoup" id="Q63881">
    <property type="interactions" value="1871"/>
</dbReference>
<dbReference type="IntAct" id="Q63881">
    <property type="interactions" value="3"/>
</dbReference>
<dbReference type="MINT" id="Q63881"/>
<dbReference type="BindingDB" id="Q63881"/>
<dbReference type="ChEMBL" id="CHEMBL1075227"/>
<dbReference type="DrugCentral" id="Q63881"/>
<dbReference type="GuidetoPHARMACOLOGY" id="553"/>
<dbReference type="iPTMnet" id="Q63881"/>
<dbReference type="PhosphoSitePlus" id="Q63881"/>
<dbReference type="PaxDb" id="10116-ENSRNOP00000039227"/>
<dbReference type="ABCD" id="Q63881">
    <property type="antibodies" value="3 sequenced antibodies"/>
</dbReference>
<dbReference type="GeneID" id="65180"/>
<dbReference type="KEGG" id="rno:65180"/>
<dbReference type="UCSC" id="RGD:68393">
    <property type="organism name" value="rat"/>
</dbReference>
<dbReference type="AGR" id="RGD:68393"/>
<dbReference type="CTD" id="3751"/>
<dbReference type="RGD" id="68393">
    <property type="gene designation" value="Kcnd2"/>
</dbReference>
<dbReference type="eggNOG" id="KOG4390">
    <property type="taxonomic scope" value="Eukaryota"/>
</dbReference>
<dbReference type="InParanoid" id="Q63881"/>
<dbReference type="OrthoDB" id="433309at2759"/>
<dbReference type="PhylomeDB" id="Q63881"/>
<dbReference type="Reactome" id="R-RNO-1296072">
    <property type="pathway name" value="Voltage gated Potassium channels"/>
</dbReference>
<dbReference type="Reactome" id="R-RNO-5576894">
    <property type="pathway name" value="Phase 1 - inactivation of fast Na+ channels"/>
</dbReference>
<dbReference type="EvolutionaryTrace" id="Q63881"/>
<dbReference type="PRO" id="PR:Q63881"/>
<dbReference type="Proteomes" id="UP000002494">
    <property type="component" value="Unplaced"/>
</dbReference>
<dbReference type="GO" id="GO:0070161">
    <property type="term" value="C:anchoring junction"/>
    <property type="evidence" value="ECO:0007669"/>
    <property type="project" value="UniProtKB-SubCell"/>
</dbReference>
<dbReference type="GO" id="GO:0005901">
    <property type="term" value="C:caveola"/>
    <property type="evidence" value="ECO:0000314"/>
    <property type="project" value="UniProtKB"/>
</dbReference>
<dbReference type="GO" id="GO:0030425">
    <property type="term" value="C:dendrite"/>
    <property type="evidence" value="ECO:0000314"/>
    <property type="project" value="RGD"/>
</dbReference>
<dbReference type="GO" id="GO:0043197">
    <property type="term" value="C:dendritic spine"/>
    <property type="evidence" value="ECO:0000314"/>
    <property type="project" value="UniProtKB"/>
</dbReference>
<dbReference type="GO" id="GO:0098982">
    <property type="term" value="C:GABA-ergic synapse"/>
    <property type="evidence" value="ECO:0000266"/>
    <property type="project" value="RGD"/>
</dbReference>
<dbReference type="GO" id="GO:0098978">
    <property type="term" value="C:glutamatergic synapse"/>
    <property type="evidence" value="ECO:0000314"/>
    <property type="project" value="SynGO"/>
</dbReference>
<dbReference type="GO" id="GO:0071193">
    <property type="term" value="C:Kv4.2-KChIP2 channel complex"/>
    <property type="evidence" value="ECO:0000266"/>
    <property type="project" value="RGD"/>
</dbReference>
<dbReference type="GO" id="GO:0016020">
    <property type="term" value="C:membrane"/>
    <property type="evidence" value="ECO:0000266"/>
    <property type="project" value="RGD"/>
</dbReference>
<dbReference type="GO" id="GO:0043025">
    <property type="term" value="C:neuronal cell body"/>
    <property type="evidence" value="ECO:0000314"/>
    <property type="project" value="RGD"/>
</dbReference>
<dbReference type="GO" id="GO:0032809">
    <property type="term" value="C:neuronal cell body membrane"/>
    <property type="evidence" value="ECO:0000314"/>
    <property type="project" value="UniProtKB"/>
</dbReference>
<dbReference type="GO" id="GO:0043204">
    <property type="term" value="C:perikaryon"/>
    <property type="evidence" value="ECO:0007669"/>
    <property type="project" value="UniProtKB-SubCell"/>
</dbReference>
<dbReference type="GO" id="GO:0097038">
    <property type="term" value="C:perinuclear endoplasmic reticulum"/>
    <property type="evidence" value="ECO:0000314"/>
    <property type="project" value="RGD"/>
</dbReference>
<dbReference type="GO" id="GO:0005886">
    <property type="term" value="C:plasma membrane"/>
    <property type="evidence" value="ECO:0000314"/>
    <property type="project" value="UniProtKB"/>
</dbReference>
<dbReference type="GO" id="GO:0044853">
    <property type="term" value="C:plasma membrane raft"/>
    <property type="evidence" value="ECO:0000314"/>
    <property type="project" value="UniProtKB"/>
</dbReference>
<dbReference type="GO" id="GO:0045211">
    <property type="term" value="C:postsynaptic membrane"/>
    <property type="evidence" value="ECO:0000314"/>
    <property type="project" value="UniProtKB"/>
</dbReference>
<dbReference type="GO" id="GO:0099634">
    <property type="term" value="C:postsynaptic specialization membrane"/>
    <property type="evidence" value="ECO:0000266"/>
    <property type="project" value="RGD"/>
</dbReference>
<dbReference type="GO" id="GO:0034705">
    <property type="term" value="C:potassium channel complex"/>
    <property type="evidence" value="ECO:0000314"/>
    <property type="project" value="RGD"/>
</dbReference>
<dbReference type="GO" id="GO:0042383">
    <property type="term" value="C:sarcolemma"/>
    <property type="evidence" value="ECO:0000314"/>
    <property type="project" value="UniProtKB"/>
</dbReference>
<dbReference type="GO" id="GO:0030315">
    <property type="term" value="C:T-tubule"/>
    <property type="evidence" value="ECO:0000314"/>
    <property type="project" value="UniProtKB"/>
</dbReference>
<dbReference type="GO" id="GO:0008076">
    <property type="term" value="C:voltage-gated potassium channel complex"/>
    <property type="evidence" value="ECO:0000314"/>
    <property type="project" value="UniProtKB"/>
</dbReference>
<dbReference type="GO" id="GO:0005250">
    <property type="term" value="F:A-type (transient outward) potassium channel activity"/>
    <property type="evidence" value="ECO:0000314"/>
    <property type="project" value="UniProtKB"/>
</dbReference>
<dbReference type="GO" id="GO:0046872">
    <property type="term" value="F:metal ion binding"/>
    <property type="evidence" value="ECO:0007669"/>
    <property type="project" value="UniProtKB-KW"/>
</dbReference>
<dbReference type="GO" id="GO:0005216">
    <property type="term" value="F:monoatomic ion channel activity"/>
    <property type="evidence" value="ECO:0000314"/>
    <property type="project" value="RGD"/>
</dbReference>
<dbReference type="GO" id="GO:0005267">
    <property type="term" value="F:potassium channel activity"/>
    <property type="evidence" value="ECO:0000314"/>
    <property type="project" value="RGD"/>
</dbReference>
<dbReference type="GO" id="GO:0044877">
    <property type="term" value="F:protein-containing complex binding"/>
    <property type="evidence" value="ECO:0000314"/>
    <property type="project" value="RGD"/>
</dbReference>
<dbReference type="GO" id="GO:1905030">
    <property type="term" value="F:voltage-gated monoatomic ion channel activity involved in regulation of postsynaptic membrane potential"/>
    <property type="evidence" value="ECO:0000266"/>
    <property type="project" value="RGD"/>
</dbReference>
<dbReference type="GO" id="GO:0005249">
    <property type="term" value="F:voltage-gated potassium channel activity"/>
    <property type="evidence" value="ECO:0000314"/>
    <property type="project" value="UniProtKB"/>
</dbReference>
<dbReference type="GO" id="GO:0001508">
    <property type="term" value="P:action potential"/>
    <property type="evidence" value="ECO:0000315"/>
    <property type="project" value="RGD"/>
</dbReference>
<dbReference type="GO" id="GO:0086001">
    <property type="term" value="P:cardiac muscle cell action potential"/>
    <property type="evidence" value="ECO:0000315"/>
    <property type="project" value="UniProtKB"/>
</dbReference>
<dbReference type="GO" id="GO:0071456">
    <property type="term" value="P:cellular response to hypoxia"/>
    <property type="evidence" value="ECO:0000314"/>
    <property type="project" value="UniProtKB"/>
</dbReference>
<dbReference type="GO" id="GO:0071260">
    <property type="term" value="P:cellular response to mechanical stimulus"/>
    <property type="evidence" value="ECO:0000270"/>
    <property type="project" value="RGD"/>
</dbReference>
<dbReference type="GO" id="GO:0071466">
    <property type="term" value="P:cellular response to xenobiotic stimulus"/>
    <property type="evidence" value="ECO:0000270"/>
    <property type="project" value="RGD"/>
</dbReference>
<dbReference type="GO" id="GO:0045475">
    <property type="term" value="P:locomotor rhythm"/>
    <property type="evidence" value="ECO:0000266"/>
    <property type="project" value="RGD"/>
</dbReference>
<dbReference type="GO" id="GO:0086009">
    <property type="term" value="P:membrane repolarization"/>
    <property type="evidence" value="ECO:0000266"/>
    <property type="project" value="RGD"/>
</dbReference>
<dbReference type="GO" id="GO:0006936">
    <property type="term" value="P:muscle contraction"/>
    <property type="evidence" value="ECO:0000266"/>
    <property type="project" value="RGD"/>
</dbReference>
<dbReference type="GO" id="GO:0019228">
    <property type="term" value="P:neuronal action potential"/>
    <property type="evidence" value="ECO:0000266"/>
    <property type="project" value="RGD"/>
</dbReference>
<dbReference type="GO" id="GO:0071805">
    <property type="term" value="P:potassium ion transmembrane transport"/>
    <property type="evidence" value="ECO:0000314"/>
    <property type="project" value="UniProtKB"/>
</dbReference>
<dbReference type="GO" id="GO:0006813">
    <property type="term" value="P:potassium ion transport"/>
    <property type="evidence" value="ECO:0000304"/>
    <property type="project" value="RGD"/>
</dbReference>
<dbReference type="GO" id="GO:0051260">
    <property type="term" value="P:protein homooligomerization"/>
    <property type="evidence" value="ECO:0007669"/>
    <property type="project" value="InterPro"/>
</dbReference>
<dbReference type="GO" id="GO:0019233">
    <property type="term" value="P:sensory perception of pain"/>
    <property type="evidence" value="ECO:0000266"/>
    <property type="project" value="RGD"/>
</dbReference>
<dbReference type="FunFam" id="1.10.287.70:FF:000073">
    <property type="entry name" value="Potassium voltage-gated channel subfamily D member 2"/>
    <property type="match status" value="1"/>
</dbReference>
<dbReference type="FunFam" id="1.10.287.70:FF:000111">
    <property type="entry name" value="Potassium voltage-gated channel subfamily D member 3"/>
    <property type="match status" value="1"/>
</dbReference>
<dbReference type="FunFam" id="1.20.120.350:FF:000016">
    <property type="entry name" value="Potassium voltage-gated channel subfamily D member 3"/>
    <property type="match status" value="1"/>
</dbReference>
<dbReference type="FunFam" id="3.30.710.10:FF:000004">
    <property type="entry name" value="Potassium voltage-gated channel subfamily D member 3"/>
    <property type="match status" value="1"/>
</dbReference>
<dbReference type="Gene3D" id="1.10.287.70">
    <property type="match status" value="1"/>
</dbReference>
<dbReference type="Gene3D" id="3.30.710.10">
    <property type="entry name" value="Potassium Channel Kv1.1, Chain A"/>
    <property type="match status" value="1"/>
</dbReference>
<dbReference type="Gene3D" id="1.20.120.350">
    <property type="entry name" value="Voltage-gated potassium channels. Chain C"/>
    <property type="match status" value="1"/>
</dbReference>
<dbReference type="InterPro" id="IPR000210">
    <property type="entry name" value="BTB/POZ_dom"/>
</dbReference>
<dbReference type="InterPro" id="IPR005821">
    <property type="entry name" value="Ion_trans_dom"/>
</dbReference>
<dbReference type="InterPro" id="IPR003968">
    <property type="entry name" value="K_chnl_volt-dep_Kv"/>
</dbReference>
<dbReference type="InterPro" id="IPR003975">
    <property type="entry name" value="K_chnl_volt-dep_Kv4"/>
</dbReference>
<dbReference type="InterPro" id="IPR004055">
    <property type="entry name" value="K_chnl_volt-dep_Kv4.2"/>
</dbReference>
<dbReference type="InterPro" id="IPR024587">
    <property type="entry name" value="K_chnl_volt-dep_Kv4_C"/>
</dbReference>
<dbReference type="InterPro" id="IPR021645">
    <property type="entry name" value="Shal-type_N"/>
</dbReference>
<dbReference type="InterPro" id="IPR011333">
    <property type="entry name" value="SKP1/BTB/POZ_sf"/>
</dbReference>
<dbReference type="InterPro" id="IPR003131">
    <property type="entry name" value="T1-type_BTB"/>
</dbReference>
<dbReference type="InterPro" id="IPR028325">
    <property type="entry name" value="VG_K_chnl"/>
</dbReference>
<dbReference type="InterPro" id="IPR027359">
    <property type="entry name" value="Volt_channel_dom_sf"/>
</dbReference>
<dbReference type="PANTHER" id="PTHR11537:SF265">
    <property type="entry name" value="POTASSIUM VOLTAGE-GATED CHANNEL SUBFAMILY D MEMBER 2"/>
    <property type="match status" value="1"/>
</dbReference>
<dbReference type="PANTHER" id="PTHR11537">
    <property type="entry name" value="VOLTAGE-GATED POTASSIUM CHANNEL"/>
    <property type="match status" value="1"/>
</dbReference>
<dbReference type="Pfam" id="PF02214">
    <property type="entry name" value="BTB_2"/>
    <property type="match status" value="1"/>
</dbReference>
<dbReference type="Pfam" id="PF11879">
    <property type="entry name" value="DUF3399"/>
    <property type="match status" value="1"/>
</dbReference>
<dbReference type="Pfam" id="PF00520">
    <property type="entry name" value="Ion_trans"/>
    <property type="match status" value="1"/>
</dbReference>
<dbReference type="Pfam" id="PF11601">
    <property type="entry name" value="Shal-type"/>
    <property type="match status" value="1"/>
</dbReference>
<dbReference type="PRINTS" id="PR00169">
    <property type="entry name" value="KCHANNEL"/>
</dbReference>
<dbReference type="PRINTS" id="PR01517">
    <property type="entry name" value="KV42CHANNEL"/>
</dbReference>
<dbReference type="PRINTS" id="PR01491">
    <property type="entry name" value="KVCHANNEL"/>
</dbReference>
<dbReference type="PRINTS" id="PR01497">
    <property type="entry name" value="SHALCHANNEL"/>
</dbReference>
<dbReference type="SMART" id="SM00225">
    <property type="entry name" value="BTB"/>
    <property type="match status" value="1"/>
</dbReference>
<dbReference type="SUPFAM" id="SSF54695">
    <property type="entry name" value="POZ domain"/>
    <property type="match status" value="1"/>
</dbReference>
<dbReference type="SUPFAM" id="SSF81324">
    <property type="entry name" value="Voltage-gated potassium channels"/>
    <property type="match status" value="1"/>
</dbReference>
<accession>Q63881</accession>
<accession>Q00090</accession>
<accession>Q99249</accession>
<proteinExistence type="evidence at protein level"/>
<sequence length="630" mass="70549">MAAGVAAWLPFARAAAIGWMPVASGPMPAPPRQERKRTQDALIVLNVSGTRFQTWQDTLERYPDTLLGSSERDFFYHPETQQYFFDRDPDIFRHILNFYRTGKLHYPRHECISAYDEELAFFGLIPEIIGDCCYEEYKDRRRENAERLQDDADTDNTGESALPTMTARQRVWRAFENPHTSTMALVFYYVTGFFIAVSVIANVVETVPCGSSPGHIKELPCGERYAVAFFCLDTACVMIFTVEYLLRLAAAPSRYRFVRSVMSIIDVVAILPYYIGLVMTDNEDVSGAFVTLRVFRVFRIFKFSRHSQGLRILGYTLKSCASELGFLLFSLTMAIIIFATVMFYAEKGSSASKFTSIPAAFWYTIVTMTTLGYGDMVPKTIAGKIFGSICSLSGVLVIALPVPVIVSNFSRIYHQNQRADKRRAQKKARLARIRAAKSGSANAYMQSKRNGLLSNQLQSSEDEPAFVSKSGSSFETQHHHLLHCLEKTTNHEFVDEQVFEESCMEVATVNRPSSHSPSLSSQQGVTSTCCSRRHKKSFRIPNANVSGSHRGSVQELSTIQIRCVERTPLSNSRSSLNAKMEECVKLNCEQPYVTTAIISIPTPPVTTPEGDDRPESPEYSGGNIVRVSAL</sequence>